<dbReference type="EC" id="6.1.1.20" evidence="1"/>
<dbReference type="EMBL" id="CP000742">
    <property type="protein sequence ID" value="ABR54711.1"/>
    <property type="molecule type" value="Genomic_DNA"/>
</dbReference>
<dbReference type="RefSeq" id="WP_011972613.1">
    <property type="nucleotide sequence ID" value="NC_009634.1"/>
</dbReference>
<dbReference type="SMR" id="A6UQD9"/>
<dbReference type="STRING" id="406327.Mevan_0805"/>
<dbReference type="GeneID" id="5324585"/>
<dbReference type="KEGG" id="mvn:Mevan_0805"/>
<dbReference type="eggNOG" id="arCOG00410">
    <property type="taxonomic scope" value="Archaea"/>
</dbReference>
<dbReference type="HOGENOM" id="CLU_025086_2_2_2"/>
<dbReference type="OrthoDB" id="372178at2157"/>
<dbReference type="Proteomes" id="UP000001107">
    <property type="component" value="Chromosome"/>
</dbReference>
<dbReference type="GO" id="GO:0005737">
    <property type="term" value="C:cytoplasm"/>
    <property type="evidence" value="ECO:0007669"/>
    <property type="project" value="UniProtKB-SubCell"/>
</dbReference>
<dbReference type="GO" id="GO:0005524">
    <property type="term" value="F:ATP binding"/>
    <property type="evidence" value="ECO:0007669"/>
    <property type="project" value="UniProtKB-UniRule"/>
</dbReference>
<dbReference type="GO" id="GO:0000287">
    <property type="term" value="F:magnesium ion binding"/>
    <property type="evidence" value="ECO:0007669"/>
    <property type="project" value="UniProtKB-UniRule"/>
</dbReference>
<dbReference type="GO" id="GO:0004826">
    <property type="term" value="F:phenylalanine-tRNA ligase activity"/>
    <property type="evidence" value="ECO:0007669"/>
    <property type="project" value="UniProtKB-UniRule"/>
</dbReference>
<dbReference type="GO" id="GO:0000049">
    <property type="term" value="F:tRNA binding"/>
    <property type="evidence" value="ECO:0007669"/>
    <property type="project" value="InterPro"/>
</dbReference>
<dbReference type="GO" id="GO:0006432">
    <property type="term" value="P:phenylalanyl-tRNA aminoacylation"/>
    <property type="evidence" value="ECO:0007669"/>
    <property type="project" value="UniProtKB-UniRule"/>
</dbReference>
<dbReference type="CDD" id="cd00496">
    <property type="entry name" value="PheRS_alpha_core"/>
    <property type="match status" value="1"/>
</dbReference>
<dbReference type="FunFam" id="3.30.930.10:FF:000095">
    <property type="entry name" value="Phenylalanine--tRNA ligase alpha subunit"/>
    <property type="match status" value="1"/>
</dbReference>
<dbReference type="Gene3D" id="3.30.930.10">
    <property type="entry name" value="Bira Bifunctional Protein, Domain 2"/>
    <property type="match status" value="1"/>
</dbReference>
<dbReference type="HAMAP" id="MF_00282">
    <property type="entry name" value="Phe_tRNA_synth_alpha2"/>
    <property type="match status" value="1"/>
</dbReference>
<dbReference type="InterPro" id="IPR006195">
    <property type="entry name" value="aa-tRNA-synth_II"/>
</dbReference>
<dbReference type="InterPro" id="IPR045864">
    <property type="entry name" value="aa-tRNA-synth_II/BPL/LPL"/>
</dbReference>
<dbReference type="InterPro" id="IPR004529">
    <property type="entry name" value="Phe-tRNA-synth_IIc_asu"/>
</dbReference>
<dbReference type="InterPro" id="IPR022917">
    <property type="entry name" value="Phe_tRNA_ligase_alpha_bac/arc"/>
</dbReference>
<dbReference type="InterPro" id="IPR002319">
    <property type="entry name" value="Phenylalanyl-tRNA_Synthase"/>
</dbReference>
<dbReference type="NCBIfam" id="TIGR00468">
    <property type="entry name" value="pheS"/>
    <property type="match status" value="1"/>
</dbReference>
<dbReference type="NCBIfam" id="NF003210">
    <property type="entry name" value="PRK04172.1"/>
    <property type="match status" value="1"/>
</dbReference>
<dbReference type="PANTHER" id="PTHR11538:SF40">
    <property type="entry name" value="PHENYLALANINE--TRNA LIGASE ALPHA SUBUNIT"/>
    <property type="match status" value="1"/>
</dbReference>
<dbReference type="PANTHER" id="PTHR11538">
    <property type="entry name" value="PHENYLALANYL-TRNA SYNTHETASE"/>
    <property type="match status" value="1"/>
</dbReference>
<dbReference type="Pfam" id="PF01409">
    <property type="entry name" value="tRNA-synt_2d"/>
    <property type="match status" value="1"/>
</dbReference>
<dbReference type="SUPFAM" id="SSF55681">
    <property type="entry name" value="Class II aaRS and biotin synthetases"/>
    <property type="match status" value="1"/>
</dbReference>
<dbReference type="PROSITE" id="PS50862">
    <property type="entry name" value="AA_TRNA_LIGASE_II"/>
    <property type="match status" value="1"/>
</dbReference>
<keyword id="KW-0030">Aminoacyl-tRNA synthetase</keyword>
<keyword id="KW-0067">ATP-binding</keyword>
<keyword id="KW-0963">Cytoplasm</keyword>
<keyword id="KW-0436">Ligase</keyword>
<keyword id="KW-0460">Magnesium</keyword>
<keyword id="KW-0479">Metal-binding</keyword>
<keyword id="KW-0547">Nucleotide-binding</keyword>
<keyword id="KW-0648">Protein biosynthesis</keyword>
<evidence type="ECO:0000255" key="1">
    <source>
        <dbReference type="HAMAP-Rule" id="MF_00282"/>
    </source>
</evidence>
<accession>A6UQD9</accession>
<proteinExistence type="inferred from homology"/>
<name>SYFA_METVS</name>
<feature type="chain" id="PRO_1000007666" description="Phenylalanine--tRNA ligase alpha subunit">
    <location>
        <begin position="1"/>
        <end position="501"/>
    </location>
</feature>
<feature type="binding site" evidence="1">
    <location>
        <position position="340"/>
    </location>
    <ligand>
        <name>L-phenylalanine</name>
        <dbReference type="ChEBI" id="CHEBI:58095"/>
    </ligand>
</feature>
<feature type="binding site" evidence="1">
    <location>
        <position position="423"/>
    </location>
    <ligand>
        <name>L-phenylalanine</name>
        <dbReference type="ChEBI" id="CHEBI:58095"/>
    </ligand>
</feature>
<feature type="binding site" evidence="1">
    <location>
        <position position="425"/>
    </location>
    <ligand>
        <name>Mg(2+)</name>
        <dbReference type="ChEBI" id="CHEBI:18420"/>
        <note>shared with beta subunit</note>
    </ligand>
</feature>
<feature type="binding site" evidence="1">
    <location>
        <position position="448"/>
    </location>
    <ligand>
        <name>L-phenylalanine</name>
        <dbReference type="ChEBI" id="CHEBI:58095"/>
    </ligand>
</feature>
<protein>
    <recommendedName>
        <fullName evidence="1">Phenylalanine--tRNA ligase alpha subunit</fullName>
        <ecNumber evidence="1">6.1.1.20</ecNumber>
    </recommendedName>
    <alternativeName>
        <fullName evidence="1">Phenylalanyl-tRNA synthetase alpha subunit</fullName>
        <shortName evidence="1">PheRS</shortName>
    </alternativeName>
</protein>
<sequence>MELHNDEKRLLKAFKDSAKNIIDSEGLLEYIEKEKIMRAAFWLTGRDFLNIIEKKSKFLELTELGKNAIESGFPERKVSNYLKTNKLDSFPIKDLSKVLEKDEAGAALGNLKKKELVTIEKGNIFFKSLEYKDLEEELLKKVSLYPNLEEYSKEEILTIETLKKRGFLKLNEVTEREFEITVKGLEYIKNPIEIKEEVTQITRDLIVSGKWKEVSIRPYDAKIPTEEIYPAKAHPMSKIIEEVTEVLTSMGFSEVKSQIVQTEFWNFDTLFEPQDHPARDMQDTFFVKYPDTGIVPHELLKKVKSIHECGKIENEKISKGWCYKFDEEVSKRTVLRTHTTVSSIKYLSSLSNEEKENFHKVFCIDRVFRNETIDYKHLPEFYQCEGIIMAEDVSFNNLVGILKEFLSKLGFEKVRIRPAYFPFTEPSLEAEVYMEGKGWLELLGAGIFRPEVLEPFGIKKPVLAWGIGLSRLAMLRLGLTDIRELHKNDIEWLKKTVVIEK</sequence>
<reference key="1">
    <citation type="submission" date="2007-06" db="EMBL/GenBank/DDBJ databases">
        <title>Complete sequence of Methanococcus vannielii SB.</title>
        <authorList>
            <consortium name="US DOE Joint Genome Institute"/>
            <person name="Copeland A."/>
            <person name="Lucas S."/>
            <person name="Lapidus A."/>
            <person name="Barry K."/>
            <person name="Glavina del Rio T."/>
            <person name="Dalin E."/>
            <person name="Tice H."/>
            <person name="Pitluck S."/>
            <person name="Chain P."/>
            <person name="Malfatti S."/>
            <person name="Shin M."/>
            <person name="Vergez L."/>
            <person name="Schmutz J."/>
            <person name="Larimer F."/>
            <person name="Land M."/>
            <person name="Hauser L."/>
            <person name="Kyrpides N."/>
            <person name="Anderson I."/>
            <person name="Sieprawska-Lupa M."/>
            <person name="Whitman W.B."/>
            <person name="Richardson P."/>
        </authorList>
    </citation>
    <scope>NUCLEOTIDE SEQUENCE [LARGE SCALE GENOMIC DNA]</scope>
    <source>
        <strain>ATCC 35089 / DSM 1224 / JCM 13029 / OCM 148 / SB</strain>
    </source>
</reference>
<organism>
    <name type="scientific">Methanococcus vannielii (strain ATCC 35089 / DSM 1224 / JCM 13029 / OCM 148 / SB)</name>
    <dbReference type="NCBI Taxonomy" id="406327"/>
    <lineage>
        <taxon>Archaea</taxon>
        <taxon>Methanobacteriati</taxon>
        <taxon>Methanobacteriota</taxon>
        <taxon>Methanomada group</taxon>
        <taxon>Methanococci</taxon>
        <taxon>Methanococcales</taxon>
        <taxon>Methanococcaceae</taxon>
        <taxon>Methanococcus</taxon>
    </lineage>
</organism>
<comment type="catalytic activity">
    <reaction evidence="1">
        <text>tRNA(Phe) + L-phenylalanine + ATP = L-phenylalanyl-tRNA(Phe) + AMP + diphosphate + H(+)</text>
        <dbReference type="Rhea" id="RHEA:19413"/>
        <dbReference type="Rhea" id="RHEA-COMP:9668"/>
        <dbReference type="Rhea" id="RHEA-COMP:9699"/>
        <dbReference type="ChEBI" id="CHEBI:15378"/>
        <dbReference type="ChEBI" id="CHEBI:30616"/>
        <dbReference type="ChEBI" id="CHEBI:33019"/>
        <dbReference type="ChEBI" id="CHEBI:58095"/>
        <dbReference type="ChEBI" id="CHEBI:78442"/>
        <dbReference type="ChEBI" id="CHEBI:78531"/>
        <dbReference type="ChEBI" id="CHEBI:456215"/>
        <dbReference type="EC" id="6.1.1.20"/>
    </reaction>
</comment>
<comment type="cofactor">
    <cofactor evidence="1">
        <name>Mg(2+)</name>
        <dbReference type="ChEBI" id="CHEBI:18420"/>
    </cofactor>
    <text evidence="1">Binds 2 magnesium ions per tetramer.</text>
</comment>
<comment type="subunit">
    <text evidence="1">Tetramer of two alpha and two beta subunits.</text>
</comment>
<comment type="subcellular location">
    <subcellularLocation>
        <location evidence="1">Cytoplasm</location>
    </subcellularLocation>
</comment>
<comment type="similarity">
    <text evidence="1">Belongs to the class-II aminoacyl-tRNA synthetase family. Phe-tRNA synthetase alpha subunit type 2 subfamily.</text>
</comment>
<gene>
    <name evidence="1" type="primary">pheS</name>
    <name type="ordered locus">Mevan_0805</name>
</gene>